<evidence type="ECO:0000250" key="1"/>
<evidence type="ECO:0000255" key="2">
    <source>
        <dbReference type="PROSITE-ProRule" id="PRU01163"/>
    </source>
</evidence>
<evidence type="ECO:0000305" key="3"/>
<keyword id="KW-0456">Lyase</keyword>
<keyword id="KW-0479">Metal-binding</keyword>
<keyword id="KW-0533">Nickel</keyword>
<keyword id="KW-1185">Reference proteome</keyword>
<accession>P0A0T3</accession>
<accession>O33393</accession>
<organism>
    <name type="scientific">Neisseria meningitidis serogroup B (strain ATCC BAA-335 / MC58)</name>
    <dbReference type="NCBI Taxonomy" id="122586"/>
    <lineage>
        <taxon>Bacteria</taxon>
        <taxon>Pseudomonadati</taxon>
        <taxon>Pseudomonadota</taxon>
        <taxon>Betaproteobacteria</taxon>
        <taxon>Neisseriales</taxon>
        <taxon>Neisseriaceae</taxon>
        <taxon>Neisseria</taxon>
    </lineage>
</organism>
<reference key="1">
    <citation type="journal article" date="2000" name="J. Med. Microbiol.">
        <title>Detection and characterisation of the genes encoding glyoxalase I and II from Neisseria meningitidis.</title>
        <authorList>
            <person name="Kizil G."/>
            <person name="Wilks K."/>
            <person name="Wells D."/>
            <person name="Ala'Aldeen D.A.A."/>
        </authorList>
    </citation>
    <scope>NUCLEOTIDE SEQUENCE [GENOMIC DNA]</scope>
    <source>
        <strain>SD / Serogroup B / Serotype 15 / Subtype 16</strain>
    </source>
</reference>
<reference key="2">
    <citation type="journal article" date="2000" name="Science">
        <title>Complete genome sequence of Neisseria meningitidis serogroup B strain MC58.</title>
        <authorList>
            <person name="Tettelin H."/>
            <person name="Saunders N.J."/>
            <person name="Heidelberg J.F."/>
            <person name="Jeffries A.C."/>
            <person name="Nelson K.E."/>
            <person name="Eisen J.A."/>
            <person name="Ketchum K.A."/>
            <person name="Hood D.W."/>
            <person name="Peden J.F."/>
            <person name="Dodson R.J."/>
            <person name="Nelson W.C."/>
            <person name="Gwinn M.L."/>
            <person name="DeBoy R.T."/>
            <person name="Peterson J.D."/>
            <person name="Hickey E.K."/>
            <person name="Haft D.H."/>
            <person name="Salzberg S.L."/>
            <person name="White O."/>
            <person name="Fleischmann R.D."/>
            <person name="Dougherty B.A."/>
            <person name="Mason T.M."/>
            <person name="Ciecko A."/>
            <person name="Parksey D.S."/>
            <person name="Blair E."/>
            <person name="Cittone H."/>
            <person name="Clark E.B."/>
            <person name="Cotton M.D."/>
            <person name="Utterback T.R."/>
            <person name="Khouri H.M."/>
            <person name="Qin H."/>
            <person name="Vamathevan J.J."/>
            <person name="Gill J."/>
            <person name="Scarlato V."/>
            <person name="Masignani V."/>
            <person name="Pizza M."/>
            <person name="Grandi G."/>
            <person name="Sun L."/>
            <person name="Smith H.O."/>
            <person name="Fraser C.M."/>
            <person name="Moxon E.R."/>
            <person name="Rappuoli R."/>
            <person name="Venter J.C."/>
        </authorList>
    </citation>
    <scope>NUCLEOTIDE SEQUENCE [LARGE SCALE GENOMIC DNA]</scope>
    <source>
        <strain>ATCC BAA-335 / MC58</strain>
    </source>
</reference>
<dbReference type="EC" id="4.4.1.5"/>
<dbReference type="EMBL" id="Y14298">
    <property type="protein sequence ID" value="CAA74673.1"/>
    <property type="molecule type" value="Genomic_DNA"/>
</dbReference>
<dbReference type="EMBL" id="AE002098">
    <property type="protein sequence ID" value="AAF40783.1"/>
    <property type="molecule type" value="Genomic_DNA"/>
</dbReference>
<dbReference type="PIR" id="G81211">
    <property type="entry name" value="G81211"/>
</dbReference>
<dbReference type="RefSeq" id="NP_273389.1">
    <property type="nucleotide sequence ID" value="NC_003112.2"/>
</dbReference>
<dbReference type="RefSeq" id="WP_002216418.1">
    <property type="nucleotide sequence ID" value="NC_003112.2"/>
</dbReference>
<dbReference type="SMR" id="P0A0T3"/>
<dbReference type="FunCoup" id="P0A0T3">
    <property type="interactions" value="467"/>
</dbReference>
<dbReference type="STRING" id="122586.NMB0340"/>
<dbReference type="PaxDb" id="122586-NMB0340"/>
<dbReference type="GeneID" id="93387432"/>
<dbReference type="KEGG" id="nme:NMB0340"/>
<dbReference type="PATRIC" id="fig|122586.8.peg.431"/>
<dbReference type="HOGENOM" id="CLU_046006_8_1_4"/>
<dbReference type="InParanoid" id="P0A0T3"/>
<dbReference type="OrthoDB" id="9789841at2"/>
<dbReference type="BRENDA" id="4.4.1.5">
    <property type="organism ID" value="3593"/>
</dbReference>
<dbReference type="UniPathway" id="UPA00619">
    <property type="reaction ID" value="UER00675"/>
</dbReference>
<dbReference type="Proteomes" id="UP000000425">
    <property type="component" value="Chromosome"/>
</dbReference>
<dbReference type="GO" id="GO:0005737">
    <property type="term" value="C:cytoplasm"/>
    <property type="evidence" value="ECO:0000318"/>
    <property type="project" value="GO_Central"/>
</dbReference>
<dbReference type="GO" id="GO:0004462">
    <property type="term" value="F:lactoylglutathione lyase activity"/>
    <property type="evidence" value="ECO:0000318"/>
    <property type="project" value="GO_Central"/>
</dbReference>
<dbReference type="GO" id="GO:0046872">
    <property type="term" value="F:metal ion binding"/>
    <property type="evidence" value="ECO:0007669"/>
    <property type="project" value="UniProtKB-KW"/>
</dbReference>
<dbReference type="GO" id="GO:0019243">
    <property type="term" value="P:methylglyoxal catabolic process to D-lactate via S-lactoyl-glutathione"/>
    <property type="evidence" value="ECO:0000318"/>
    <property type="project" value="GO_Central"/>
</dbReference>
<dbReference type="CDD" id="cd16358">
    <property type="entry name" value="GlxI_Ni"/>
    <property type="match status" value="1"/>
</dbReference>
<dbReference type="Gene3D" id="3.10.180.10">
    <property type="entry name" value="2,3-Dihydroxybiphenyl 1,2-Dioxygenase, domain 1"/>
    <property type="match status" value="1"/>
</dbReference>
<dbReference type="InterPro" id="IPR029068">
    <property type="entry name" value="Glyas_Bleomycin-R_OHBP_Dase"/>
</dbReference>
<dbReference type="InterPro" id="IPR004360">
    <property type="entry name" value="Glyas_Fos-R_dOase_dom"/>
</dbReference>
<dbReference type="InterPro" id="IPR004361">
    <property type="entry name" value="Glyoxalase_1"/>
</dbReference>
<dbReference type="InterPro" id="IPR018146">
    <property type="entry name" value="Glyoxalase_1_CS"/>
</dbReference>
<dbReference type="InterPro" id="IPR037523">
    <property type="entry name" value="VOC"/>
</dbReference>
<dbReference type="NCBIfam" id="TIGR00068">
    <property type="entry name" value="glyox_I"/>
    <property type="match status" value="1"/>
</dbReference>
<dbReference type="PANTHER" id="PTHR46036">
    <property type="entry name" value="LACTOYLGLUTATHIONE LYASE"/>
    <property type="match status" value="1"/>
</dbReference>
<dbReference type="PANTHER" id="PTHR46036:SF5">
    <property type="entry name" value="LACTOYLGLUTATHIONE LYASE"/>
    <property type="match status" value="1"/>
</dbReference>
<dbReference type="Pfam" id="PF00903">
    <property type="entry name" value="Glyoxalase"/>
    <property type="match status" value="1"/>
</dbReference>
<dbReference type="SUPFAM" id="SSF54593">
    <property type="entry name" value="Glyoxalase/Bleomycin resistance protein/Dihydroxybiphenyl dioxygenase"/>
    <property type="match status" value="1"/>
</dbReference>
<dbReference type="PROSITE" id="PS00934">
    <property type="entry name" value="GLYOXALASE_I_1"/>
    <property type="match status" value="1"/>
</dbReference>
<dbReference type="PROSITE" id="PS00935">
    <property type="entry name" value="GLYOXALASE_I_2"/>
    <property type="match status" value="1"/>
</dbReference>
<dbReference type="PROSITE" id="PS51819">
    <property type="entry name" value="VOC"/>
    <property type="match status" value="1"/>
</dbReference>
<name>LGUL_NEIMB</name>
<proteinExistence type="inferred from homology"/>
<protein>
    <recommendedName>
        <fullName>Lactoylglutathione lyase</fullName>
        <ecNumber>4.4.1.5</ecNumber>
    </recommendedName>
    <alternativeName>
        <fullName>Aldoketomutase</fullName>
    </alternativeName>
    <alternativeName>
        <fullName>Glyoxalase I</fullName>
        <shortName>Glx I</shortName>
    </alternativeName>
    <alternativeName>
        <fullName>Ketone-aldehyde mutase</fullName>
    </alternativeName>
    <alternativeName>
        <fullName>Methylglyoxalase</fullName>
    </alternativeName>
    <alternativeName>
        <fullName>S-D-lactoylglutathione methylglyoxal lyase</fullName>
    </alternativeName>
</protein>
<feature type="chain" id="PRO_0000168095" description="Lactoylglutathione lyase">
    <location>
        <begin position="1"/>
        <end position="138"/>
    </location>
</feature>
<feature type="domain" description="VOC" evidence="2">
    <location>
        <begin position="2"/>
        <end position="126"/>
    </location>
</feature>
<feature type="active site" description="Proton donor/acceptor" evidence="1">
    <location>
        <position position="122"/>
    </location>
</feature>
<feature type="binding site" evidence="1">
    <location>
        <position position="5"/>
    </location>
    <ligand>
        <name>Ni(2+)</name>
        <dbReference type="ChEBI" id="CHEBI:49786"/>
    </ligand>
</feature>
<feature type="binding site" evidence="1">
    <location>
        <position position="9"/>
    </location>
    <ligand>
        <name>substrate</name>
    </ligand>
</feature>
<feature type="binding site" evidence="1">
    <location>
        <position position="56"/>
    </location>
    <ligand>
        <name>Ni(2+)</name>
        <dbReference type="ChEBI" id="CHEBI:49786"/>
    </ligand>
</feature>
<feature type="binding site" evidence="1">
    <location>
        <position position="60"/>
    </location>
    <ligand>
        <name>substrate</name>
    </ligand>
</feature>
<feature type="binding site" evidence="1">
    <location>
        <position position="74"/>
    </location>
    <ligand>
        <name>Ni(2+)</name>
        <dbReference type="ChEBI" id="CHEBI:49786"/>
    </ligand>
</feature>
<feature type="binding site" evidence="1">
    <location>
        <position position="74"/>
    </location>
    <ligand>
        <name>substrate</name>
    </ligand>
</feature>
<feature type="binding site" evidence="1">
    <location>
        <position position="122"/>
    </location>
    <ligand>
        <name>Ni(2+)</name>
        <dbReference type="ChEBI" id="CHEBI:49786"/>
    </ligand>
</feature>
<sequence length="138" mass="15669">MRLLHTMLRVGNLEKSLDFYQNVLGMKLLRRKDYPEGRFTLAFVGYGDETDSTVLELTHNWDTERYDLGNAYGHIAVEVDDAYEACERVKRQGGNVVREAGPMKHGTTVIAFVEDPDGYKIEFIQKKSGDDSVAYQTA</sequence>
<comment type="function">
    <text evidence="1">Catalyzes the conversion of hemimercaptal, formed from methylglyoxal and glutathione, to S-lactoylglutathione.</text>
</comment>
<comment type="catalytic activity">
    <reaction>
        <text>(R)-S-lactoylglutathione = methylglyoxal + glutathione</text>
        <dbReference type="Rhea" id="RHEA:19069"/>
        <dbReference type="ChEBI" id="CHEBI:17158"/>
        <dbReference type="ChEBI" id="CHEBI:57474"/>
        <dbReference type="ChEBI" id="CHEBI:57925"/>
        <dbReference type="EC" id="4.4.1.5"/>
    </reaction>
</comment>
<comment type="cofactor">
    <cofactor evidence="1">
        <name>Ni(2+)</name>
        <dbReference type="ChEBI" id="CHEBI:49786"/>
    </cofactor>
    <text evidence="1">Binds 1 nickel ion per subunit.</text>
</comment>
<comment type="pathway">
    <text>Secondary metabolite metabolism; methylglyoxal degradation; (R)-lactate from methylglyoxal: step 1/2.</text>
</comment>
<comment type="similarity">
    <text evidence="3">Belongs to the glyoxalase I family.</text>
</comment>
<gene>
    <name type="primary">gloA</name>
    <name type="ordered locus">NMB0340</name>
</gene>